<sequence length="114" mass="12099">MSDDVALPLQFTDAAANKVKSLIADEDNPNLKLRVYITGGGCSGFQYGFTFDDQVNEGDMTIEKQGVGLVVDPMSLQYLVGGSVDYTEGLEGSRFIVTNPNAKSTCGCGSSFSI</sequence>
<dbReference type="EMBL" id="AM933173">
    <property type="protein sequence ID" value="CAR36115.1"/>
    <property type="molecule type" value="Genomic_DNA"/>
</dbReference>
<dbReference type="RefSeq" id="WP_001278668.1">
    <property type="nucleotide sequence ID" value="NC_011274.1"/>
</dbReference>
<dbReference type="SMR" id="B5RHE2"/>
<dbReference type="GeneID" id="66754727"/>
<dbReference type="KEGG" id="seg:SG0208"/>
<dbReference type="HOGENOM" id="CLU_069054_5_3_6"/>
<dbReference type="Proteomes" id="UP000008321">
    <property type="component" value="Chromosome"/>
</dbReference>
<dbReference type="GO" id="GO:0005829">
    <property type="term" value="C:cytosol"/>
    <property type="evidence" value="ECO:0007669"/>
    <property type="project" value="TreeGrafter"/>
</dbReference>
<dbReference type="GO" id="GO:0051537">
    <property type="term" value="F:2 iron, 2 sulfur cluster binding"/>
    <property type="evidence" value="ECO:0007669"/>
    <property type="project" value="TreeGrafter"/>
</dbReference>
<dbReference type="GO" id="GO:0051539">
    <property type="term" value="F:4 iron, 4 sulfur cluster binding"/>
    <property type="evidence" value="ECO:0007669"/>
    <property type="project" value="TreeGrafter"/>
</dbReference>
<dbReference type="GO" id="GO:0005506">
    <property type="term" value="F:iron ion binding"/>
    <property type="evidence" value="ECO:0007669"/>
    <property type="project" value="UniProtKB-UniRule"/>
</dbReference>
<dbReference type="GO" id="GO:0016226">
    <property type="term" value="P:iron-sulfur cluster assembly"/>
    <property type="evidence" value="ECO:0007669"/>
    <property type="project" value="UniProtKB-UniRule"/>
</dbReference>
<dbReference type="FunFam" id="2.60.300.12:FF:000002">
    <property type="entry name" value="Iron-sulfur cluster insertion protein ErpA"/>
    <property type="match status" value="1"/>
</dbReference>
<dbReference type="Gene3D" id="2.60.300.12">
    <property type="entry name" value="HesB-like domain"/>
    <property type="match status" value="1"/>
</dbReference>
<dbReference type="HAMAP" id="MF_01380">
    <property type="entry name" value="Fe_S_insert_ErpA"/>
    <property type="match status" value="1"/>
</dbReference>
<dbReference type="InterPro" id="IPR000361">
    <property type="entry name" value="FeS_biogenesis"/>
</dbReference>
<dbReference type="InterPro" id="IPR016092">
    <property type="entry name" value="FeS_cluster_insertion"/>
</dbReference>
<dbReference type="InterPro" id="IPR017870">
    <property type="entry name" value="FeS_cluster_insertion_CS"/>
</dbReference>
<dbReference type="InterPro" id="IPR023063">
    <property type="entry name" value="FeS_cluster_insertion_RrpA"/>
</dbReference>
<dbReference type="InterPro" id="IPR035903">
    <property type="entry name" value="HesB-like_dom_sf"/>
</dbReference>
<dbReference type="NCBIfam" id="TIGR00049">
    <property type="entry name" value="iron-sulfur cluster assembly accessory protein"/>
    <property type="match status" value="1"/>
</dbReference>
<dbReference type="NCBIfam" id="NF010147">
    <property type="entry name" value="PRK13623.1"/>
    <property type="match status" value="1"/>
</dbReference>
<dbReference type="PANTHER" id="PTHR43011">
    <property type="entry name" value="IRON-SULFUR CLUSTER ASSEMBLY 2 HOMOLOG, MITOCHONDRIAL"/>
    <property type="match status" value="1"/>
</dbReference>
<dbReference type="PANTHER" id="PTHR43011:SF1">
    <property type="entry name" value="IRON-SULFUR CLUSTER ASSEMBLY 2 HOMOLOG, MITOCHONDRIAL"/>
    <property type="match status" value="1"/>
</dbReference>
<dbReference type="Pfam" id="PF01521">
    <property type="entry name" value="Fe-S_biosyn"/>
    <property type="match status" value="1"/>
</dbReference>
<dbReference type="SUPFAM" id="SSF89360">
    <property type="entry name" value="HesB-like domain"/>
    <property type="match status" value="1"/>
</dbReference>
<dbReference type="PROSITE" id="PS01152">
    <property type="entry name" value="HESB"/>
    <property type="match status" value="1"/>
</dbReference>
<evidence type="ECO:0000255" key="1">
    <source>
        <dbReference type="HAMAP-Rule" id="MF_01380"/>
    </source>
</evidence>
<name>ERPA_SALG2</name>
<protein>
    <recommendedName>
        <fullName evidence="1">Iron-sulfur cluster insertion protein ErpA</fullName>
    </recommendedName>
</protein>
<accession>B5RHE2</accession>
<gene>
    <name evidence="1" type="primary">erpA</name>
    <name type="ordered locus">SG0208</name>
</gene>
<reference key="1">
    <citation type="journal article" date="2008" name="Genome Res.">
        <title>Comparative genome analysis of Salmonella enteritidis PT4 and Salmonella gallinarum 287/91 provides insights into evolutionary and host adaptation pathways.</title>
        <authorList>
            <person name="Thomson N.R."/>
            <person name="Clayton D.J."/>
            <person name="Windhorst D."/>
            <person name="Vernikos G."/>
            <person name="Davidson S."/>
            <person name="Churcher C."/>
            <person name="Quail M.A."/>
            <person name="Stevens M."/>
            <person name="Jones M.A."/>
            <person name="Watson M."/>
            <person name="Barron A."/>
            <person name="Layton A."/>
            <person name="Pickard D."/>
            <person name="Kingsley R.A."/>
            <person name="Bignell A."/>
            <person name="Clark L."/>
            <person name="Harris B."/>
            <person name="Ormond D."/>
            <person name="Abdellah Z."/>
            <person name="Brooks K."/>
            <person name="Cherevach I."/>
            <person name="Chillingworth T."/>
            <person name="Woodward J."/>
            <person name="Norberczak H."/>
            <person name="Lord A."/>
            <person name="Arrowsmith C."/>
            <person name="Jagels K."/>
            <person name="Moule S."/>
            <person name="Mungall K."/>
            <person name="Saunders M."/>
            <person name="Whitehead S."/>
            <person name="Chabalgoity J.A."/>
            <person name="Maskell D."/>
            <person name="Humphreys T."/>
            <person name="Roberts M."/>
            <person name="Barrow P.A."/>
            <person name="Dougan G."/>
            <person name="Parkhill J."/>
        </authorList>
    </citation>
    <scope>NUCLEOTIDE SEQUENCE [LARGE SCALE GENOMIC DNA]</scope>
    <source>
        <strain>287/91 / NCTC 13346</strain>
    </source>
</reference>
<feature type="chain" id="PRO_1000144931" description="Iron-sulfur cluster insertion protein ErpA">
    <location>
        <begin position="1"/>
        <end position="114"/>
    </location>
</feature>
<feature type="binding site" evidence="1">
    <location>
        <position position="42"/>
    </location>
    <ligand>
        <name>iron-sulfur cluster</name>
        <dbReference type="ChEBI" id="CHEBI:30408"/>
    </ligand>
</feature>
<feature type="binding site" evidence="1">
    <location>
        <position position="106"/>
    </location>
    <ligand>
        <name>iron-sulfur cluster</name>
        <dbReference type="ChEBI" id="CHEBI:30408"/>
    </ligand>
</feature>
<feature type="binding site" evidence="1">
    <location>
        <position position="108"/>
    </location>
    <ligand>
        <name>iron-sulfur cluster</name>
        <dbReference type="ChEBI" id="CHEBI:30408"/>
    </ligand>
</feature>
<organism>
    <name type="scientific">Salmonella gallinarum (strain 287/91 / NCTC 13346)</name>
    <dbReference type="NCBI Taxonomy" id="550538"/>
    <lineage>
        <taxon>Bacteria</taxon>
        <taxon>Pseudomonadati</taxon>
        <taxon>Pseudomonadota</taxon>
        <taxon>Gammaproteobacteria</taxon>
        <taxon>Enterobacterales</taxon>
        <taxon>Enterobacteriaceae</taxon>
        <taxon>Salmonella</taxon>
    </lineage>
</organism>
<proteinExistence type="inferred from homology"/>
<keyword id="KW-0408">Iron</keyword>
<keyword id="KW-0411">Iron-sulfur</keyword>
<keyword id="KW-0479">Metal-binding</keyword>
<comment type="function">
    <text evidence="1">Required for insertion of 4Fe-4S clusters for at least IspG.</text>
</comment>
<comment type="cofactor">
    <cofactor evidence="1">
        <name>iron-sulfur cluster</name>
        <dbReference type="ChEBI" id="CHEBI:30408"/>
    </cofactor>
    <text evidence="1">Binds 1 iron-sulfur cluster per subunit.</text>
</comment>
<comment type="subunit">
    <text evidence="1">Homodimer.</text>
</comment>
<comment type="similarity">
    <text evidence="1">Belongs to the HesB/IscA family.</text>
</comment>